<reference key="1">
    <citation type="journal article" date="2010" name="Science">
        <title>The genome of the Western clawed frog Xenopus tropicalis.</title>
        <authorList>
            <person name="Hellsten U."/>
            <person name="Harland R.M."/>
            <person name="Gilchrist M.J."/>
            <person name="Hendrix D."/>
            <person name="Jurka J."/>
            <person name="Kapitonov V."/>
            <person name="Ovcharenko I."/>
            <person name="Putnam N.H."/>
            <person name="Shu S."/>
            <person name="Taher L."/>
            <person name="Blitz I.L."/>
            <person name="Blumberg B."/>
            <person name="Dichmann D.S."/>
            <person name="Dubchak I."/>
            <person name="Amaya E."/>
            <person name="Detter J.C."/>
            <person name="Fletcher R."/>
            <person name="Gerhard D.S."/>
            <person name="Goodstein D."/>
            <person name="Graves T."/>
            <person name="Grigoriev I.V."/>
            <person name="Grimwood J."/>
            <person name="Kawashima T."/>
            <person name="Lindquist E."/>
            <person name="Lucas S.M."/>
            <person name="Mead P.E."/>
            <person name="Mitros T."/>
            <person name="Ogino H."/>
            <person name="Ohta Y."/>
            <person name="Poliakov A.V."/>
            <person name="Pollet N."/>
            <person name="Robert J."/>
            <person name="Salamov A."/>
            <person name="Sater A.K."/>
            <person name="Schmutz J."/>
            <person name="Terry A."/>
            <person name="Vize P.D."/>
            <person name="Warren W.C."/>
            <person name="Wells D."/>
            <person name="Wills A."/>
            <person name="Wilson R.K."/>
            <person name="Zimmerman L.B."/>
            <person name="Zorn A.M."/>
            <person name="Grainger R."/>
            <person name="Grammer T."/>
            <person name="Khokha M.K."/>
            <person name="Richardson P.M."/>
            <person name="Rokhsar D.S."/>
        </authorList>
    </citation>
    <scope>NUCLEOTIDE SEQUENCE [LARGE SCALE GENOMIC DNA]</scope>
</reference>
<reference key="2">
    <citation type="journal article" date="2013" name="Nat. Cell Biol.">
        <title>The Cep63 paralogue Deup1 enables massive de novo centriole biogenesis for vertebrate multiciliogenesis.</title>
        <authorList>
            <person name="Zhao H."/>
            <person name="Zhu L."/>
            <person name="Zhu Y."/>
            <person name="Cao J."/>
            <person name="Li S."/>
            <person name="Huang Q."/>
            <person name="Xu T."/>
            <person name="Huang X."/>
            <person name="Yan X."/>
            <person name="Zhu X."/>
        </authorList>
    </citation>
    <scope>FUNCTION</scope>
    <scope>DISRUPTION PHENOTYPE</scope>
</reference>
<feature type="chain" id="PRO_0000425207" description="Deuterosome assembly protein 1">
    <location>
        <begin position="1"/>
        <end position="596"/>
    </location>
</feature>
<feature type="region of interest" description="Disordered" evidence="4">
    <location>
        <begin position="297"/>
        <end position="316"/>
    </location>
</feature>
<feature type="region of interest" description="Disordered" evidence="4">
    <location>
        <begin position="447"/>
        <end position="467"/>
    </location>
</feature>
<feature type="coiled-coil region" evidence="3">
    <location>
        <begin position="8"/>
        <end position="68"/>
    </location>
</feature>
<feature type="coiled-coil region" evidence="3">
    <location>
        <begin position="130"/>
        <end position="180"/>
    </location>
</feature>
<feature type="coiled-coil region" evidence="3">
    <location>
        <begin position="227"/>
        <end position="284"/>
    </location>
</feature>
<feature type="coiled-coil region" evidence="3">
    <location>
        <begin position="337"/>
        <end position="402"/>
    </location>
</feature>
<feature type="compositionally biased region" description="Polar residues" evidence="4">
    <location>
        <begin position="297"/>
        <end position="306"/>
    </location>
</feature>
<feature type="compositionally biased region" description="Polar residues" evidence="4">
    <location>
        <begin position="457"/>
        <end position="467"/>
    </location>
</feature>
<sequence length="596" mass="69022">MFTNIHSIARNSSCENELEELMHQIDIMVSHRKVEWEKHVKVLEQKLEAQDRELTEARNLVDEKNHEIGILCKKLEGVDTAQHEMAQNYERQLQALKFQLCKLKKSYEKLHFHQEKHQKNENAAQERSRCELQWLTQKIEEFKARSREWEKQRVFYQDQLKSLDEQRKTLAEKCQLFQKESLSYQEQLSSQKQLQSEAITNNQSEMRRLRCLLDTSQETIRSDGVIIENLKSTVKEITLSRDSLKDENQQLLQELRRCQKQSQNMEAQLYKAKLELQSCNDLLRVPALEERQAQKETANLANQKTAQGEEASFQVTDPRMNYMTSEPEHKSFNLSKSEKYQAENDLHGTEAKNSDLERLRKDIGDLTAKLNQKDVTIATVSRKVSRLERELELKGAQNRQTSMPLSQKDVIAELESEMPQIHAVNKAPQTDSGEVDPWISIKCGEHDKPQKHRSFHGENNSLKPTNYADTRNHSVGSEWESEKSLCPWNTPTLGSATDDDCDLVDNENEWLSLYNSTLYPGLDLPPISYACDQLKDSTNSSLAGSSLISAAEKFLLEETRRASDFEKILNSHIEEMKRNSESTVSRYQSHGQSRHI</sequence>
<name>DEUP1_XENTR</name>
<proteinExistence type="inferred from homology"/>
<keyword id="KW-0970">Cilium biogenesis/degradation</keyword>
<keyword id="KW-0175">Coiled coil</keyword>
<keyword id="KW-0963">Cytoplasm</keyword>
<keyword id="KW-1185">Reference proteome</keyword>
<organism>
    <name type="scientific">Xenopus tropicalis</name>
    <name type="common">Western clawed frog</name>
    <name type="synonym">Silurana tropicalis</name>
    <dbReference type="NCBI Taxonomy" id="8364"/>
    <lineage>
        <taxon>Eukaryota</taxon>
        <taxon>Metazoa</taxon>
        <taxon>Chordata</taxon>
        <taxon>Craniata</taxon>
        <taxon>Vertebrata</taxon>
        <taxon>Euteleostomi</taxon>
        <taxon>Amphibia</taxon>
        <taxon>Batrachia</taxon>
        <taxon>Anura</taxon>
        <taxon>Pipoidea</taxon>
        <taxon>Pipidae</taxon>
        <taxon>Xenopodinae</taxon>
        <taxon>Xenopus</taxon>
        <taxon>Silurana</taxon>
    </lineage>
</organism>
<evidence type="ECO:0000250" key="1"/>
<evidence type="ECO:0000250" key="2">
    <source>
        <dbReference type="UniProtKB" id="Q05D60"/>
    </source>
</evidence>
<evidence type="ECO:0000255" key="3"/>
<evidence type="ECO:0000256" key="4">
    <source>
        <dbReference type="SAM" id="MobiDB-lite"/>
    </source>
</evidence>
<evidence type="ECO:0000269" key="5">
    <source>
    </source>
</evidence>
<evidence type="ECO:0000305" key="6"/>
<dbReference type="EMBL" id="AAMC01100161">
    <property type="status" value="NOT_ANNOTATED_CDS"/>
    <property type="molecule type" value="Genomic_DNA"/>
</dbReference>
<dbReference type="SMR" id="F7DP49"/>
<dbReference type="FunCoup" id="F7DP49">
    <property type="interactions" value="54"/>
</dbReference>
<dbReference type="STRING" id="8364.ENSXETP00000027654"/>
<dbReference type="PaxDb" id="8364-ENSXETP00000037319"/>
<dbReference type="eggNOG" id="ENOG502QRBJ">
    <property type="taxonomic scope" value="Eukaryota"/>
</dbReference>
<dbReference type="HOGENOM" id="CLU_073230_0_0_1"/>
<dbReference type="InParanoid" id="F7DP49"/>
<dbReference type="TreeFam" id="TF330595"/>
<dbReference type="Proteomes" id="UP000008143">
    <property type="component" value="Unplaced"/>
</dbReference>
<dbReference type="Bgee" id="ENSXETG00000017121">
    <property type="expression patterns" value="Expressed in testis and 7 other cell types or tissues"/>
</dbReference>
<dbReference type="ExpressionAtlas" id="F7DP49">
    <property type="expression patterns" value="differential"/>
</dbReference>
<dbReference type="GO" id="GO:0005737">
    <property type="term" value="C:cytoplasm"/>
    <property type="evidence" value="ECO:0007669"/>
    <property type="project" value="UniProtKB-SubCell"/>
</dbReference>
<dbReference type="GO" id="GO:0098536">
    <property type="term" value="C:deuterosome"/>
    <property type="evidence" value="ECO:0000250"/>
    <property type="project" value="UniProtKB"/>
</dbReference>
<dbReference type="GO" id="GO:0030030">
    <property type="term" value="P:cell projection organization"/>
    <property type="evidence" value="ECO:0007669"/>
    <property type="project" value="UniProtKB-KW"/>
</dbReference>
<dbReference type="GO" id="GO:0098535">
    <property type="term" value="P:de novo centriole assembly involved in multi-ciliated epithelial cell differentiation"/>
    <property type="evidence" value="ECO:0000315"/>
    <property type="project" value="UniProtKB"/>
</dbReference>
<dbReference type="GO" id="GO:1903251">
    <property type="term" value="P:multi-ciliated epithelial cell differentiation"/>
    <property type="evidence" value="ECO:0000250"/>
    <property type="project" value="UniProtKB"/>
</dbReference>
<dbReference type="InterPro" id="IPR031470">
    <property type="entry name" value="Cep63/Deup1_N"/>
</dbReference>
<dbReference type="PANTHER" id="PTHR18875:SF5">
    <property type="entry name" value="DEUTEROSOME ASSEMBLY PROTEIN 1"/>
    <property type="match status" value="1"/>
</dbReference>
<dbReference type="PANTHER" id="PTHR18875">
    <property type="entry name" value="SARCOMA ANTIGEN NY-SAR-24/CYTOSKELETAL PROTEIN SOJO"/>
    <property type="match status" value="1"/>
</dbReference>
<dbReference type="Pfam" id="PF17045">
    <property type="entry name" value="CEP63"/>
    <property type="match status" value="1"/>
</dbReference>
<comment type="function">
    <text evidence="5">Key structural component of the deuterosome, a structure that promotes de novo centriole amplification in multiciliated cells. Deuterosome-mediated centriole amplification occurs in terminally differentiated multiciliated cells and can generate more than 100 centrioles. Probably sufficient for the specification and formation of the deuterosome inner core.</text>
</comment>
<comment type="subcellular location">
    <subcellularLocation>
        <location evidence="1">Cytoplasm</location>
    </subcellularLocation>
    <text evidence="1">Localizes to the deuterosome.</text>
</comment>
<comment type="disruption phenotype">
    <text evidence="5">Decreased skin multicilia formation in embryos.</text>
</comment>
<comment type="similarity">
    <text evidence="6">Belongs to the CEP63 family.</text>
</comment>
<protein>
    <recommendedName>
        <fullName evidence="2">Deuterosome assembly protein 1</fullName>
    </recommendedName>
    <alternativeName>
        <fullName>Coiled-coil domain-containing protein 67</fullName>
    </alternativeName>
</protein>
<gene>
    <name evidence="2" type="primary">deup1</name>
    <name type="synonym">ccdc67</name>
</gene>
<accession>F7DP49</accession>